<keyword id="KW-0007">Acetylation</keyword>
<keyword id="KW-0025">Alternative splicing</keyword>
<keyword id="KW-0479">Metal-binding</keyword>
<keyword id="KW-1185">Reference proteome</keyword>
<keyword id="KW-0677">Repeat</keyword>
<keyword id="KW-0862">Zinc</keyword>
<keyword id="KW-0863">Zinc-finger</keyword>
<reference key="1">
    <citation type="journal article" date="2005" name="Science">
        <title>The transcriptional landscape of the mammalian genome.</title>
        <authorList>
            <person name="Carninci P."/>
            <person name="Kasukawa T."/>
            <person name="Katayama S."/>
            <person name="Gough J."/>
            <person name="Frith M.C."/>
            <person name="Maeda N."/>
            <person name="Oyama R."/>
            <person name="Ravasi T."/>
            <person name="Lenhard B."/>
            <person name="Wells C."/>
            <person name="Kodzius R."/>
            <person name="Shimokawa K."/>
            <person name="Bajic V.B."/>
            <person name="Brenner S.E."/>
            <person name="Batalov S."/>
            <person name="Forrest A.R."/>
            <person name="Zavolan M."/>
            <person name="Davis M.J."/>
            <person name="Wilming L.G."/>
            <person name="Aidinis V."/>
            <person name="Allen J.E."/>
            <person name="Ambesi-Impiombato A."/>
            <person name="Apweiler R."/>
            <person name="Aturaliya R.N."/>
            <person name="Bailey T.L."/>
            <person name="Bansal M."/>
            <person name="Baxter L."/>
            <person name="Beisel K.W."/>
            <person name="Bersano T."/>
            <person name="Bono H."/>
            <person name="Chalk A.M."/>
            <person name="Chiu K.P."/>
            <person name="Choudhary V."/>
            <person name="Christoffels A."/>
            <person name="Clutterbuck D.R."/>
            <person name="Crowe M.L."/>
            <person name="Dalla E."/>
            <person name="Dalrymple B.P."/>
            <person name="de Bono B."/>
            <person name="Della Gatta G."/>
            <person name="di Bernardo D."/>
            <person name="Down T."/>
            <person name="Engstrom P."/>
            <person name="Fagiolini M."/>
            <person name="Faulkner G."/>
            <person name="Fletcher C.F."/>
            <person name="Fukushima T."/>
            <person name="Furuno M."/>
            <person name="Futaki S."/>
            <person name="Gariboldi M."/>
            <person name="Georgii-Hemming P."/>
            <person name="Gingeras T.R."/>
            <person name="Gojobori T."/>
            <person name="Green R.E."/>
            <person name="Gustincich S."/>
            <person name="Harbers M."/>
            <person name="Hayashi Y."/>
            <person name="Hensch T.K."/>
            <person name="Hirokawa N."/>
            <person name="Hill D."/>
            <person name="Huminiecki L."/>
            <person name="Iacono M."/>
            <person name="Ikeo K."/>
            <person name="Iwama A."/>
            <person name="Ishikawa T."/>
            <person name="Jakt M."/>
            <person name="Kanapin A."/>
            <person name="Katoh M."/>
            <person name="Kawasawa Y."/>
            <person name="Kelso J."/>
            <person name="Kitamura H."/>
            <person name="Kitano H."/>
            <person name="Kollias G."/>
            <person name="Krishnan S.P."/>
            <person name="Kruger A."/>
            <person name="Kummerfeld S.K."/>
            <person name="Kurochkin I.V."/>
            <person name="Lareau L.F."/>
            <person name="Lazarevic D."/>
            <person name="Lipovich L."/>
            <person name="Liu J."/>
            <person name="Liuni S."/>
            <person name="McWilliam S."/>
            <person name="Madan Babu M."/>
            <person name="Madera M."/>
            <person name="Marchionni L."/>
            <person name="Matsuda H."/>
            <person name="Matsuzawa S."/>
            <person name="Miki H."/>
            <person name="Mignone F."/>
            <person name="Miyake S."/>
            <person name="Morris K."/>
            <person name="Mottagui-Tabar S."/>
            <person name="Mulder N."/>
            <person name="Nakano N."/>
            <person name="Nakauchi H."/>
            <person name="Ng P."/>
            <person name="Nilsson R."/>
            <person name="Nishiguchi S."/>
            <person name="Nishikawa S."/>
            <person name="Nori F."/>
            <person name="Ohara O."/>
            <person name="Okazaki Y."/>
            <person name="Orlando V."/>
            <person name="Pang K.C."/>
            <person name="Pavan W.J."/>
            <person name="Pavesi G."/>
            <person name="Pesole G."/>
            <person name="Petrovsky N."/>
            <person name="Piazza S."/>
            <person name="Reed J."/>
            <person name="Reid J.F."/>
            <person name="Ring B.Z."/>
            <person name="Ringwald M."/>
            <person name="Rost B."/>
            <person name="Ruan Y."/>
            <person name="Salzberg S.L."/>
            <person name="Sandelin A."/>
            <person name="Schneider C."/>
            <person name="Schoenbach C."/>
            <person name="Sekiguchi K."/>
            <person name="Semple C.A."/>
            <person name="Seno S."/>
            <person name="Sessa L."/>
            <person name="Sheng Y."/>
            <person name="Shibata Y."/>
            <person name="Shimada H."/>
            <person name="Shimada K."/>
            <person name="Silva D."/>
            <person name="Sinclair B."/>
            <person name="Sperling S."/>
            <person name="Stupka E."/>
            <person name="Sugiura K."/>
            <person name="Sultana R."/>
            <person name="Takenaka Y."/>
            <person name="Taki K."/>
            <person name="Tammoja K."/>
            <person name="Tan S.L."/>
            <person name="Tang S."/>
            <person name="Taylor M.S."/>
            <person name="Tegner J."/>
            <person name="Teichmann S.A."/>
            <person name="Ueda H.R."/>
            <person name="van Nimwegen E."/>
            <person name="Verardo R."/>
            <person name="Wei C.L."/>
            <person name="Yagi K."/>
            <person name="Yamanishi H."/>
            <person name="Zabarovsky E."/>
            <person name="Zhu S."/>
            <person name="Zimmer A."/>
            <person name="Hide W."/>
            <person name="Bult C."/>
            <person name="Grimmond S.M."/>
            <person name="Teasdale R.D."/>
            <person name="Liu E.T."/>
            <person name="Brusic V."/>
            <person name="Quackenbush J."/>
            <person name="Wahlestedt C."/>
            <person name="Mattick J.S."/>
            <person name="Hume D.A."/>
            <person name="Kai C."/>
            <person name="Sasaki D."/>
            <person name="Tomaru Y."/>
            <person name="Fukuda S."/>
            <person name="Kanamori-Katayama M."/>
            <person name="Suzuki M."/>
            <person name="Aoki J."/>
            <person name="Arakawa T."/>
            <person name="Iida J."/>
            <person name="Imamura K."/>
            <person name="Itoh M."/>
            <person name="Kato T."/>
            <person name="Kawaji H."/>
            <person name="Kawagashira N."/>
            <person name="Kawashima T."/>
            <person name="Kojima M."/>
            <person name="Kondo S."/>
            <person name="Konno H."/>
            <person name="Nakano K."/>
            <person name="Ninomiya N."/>
            <person name="Nishio T."/>
            <person name="Okada M."/>
            <person name="Plessy C."/>
            <person name="Shibata K."/>
            <person name="Shiraki T."/>
            <person name="Suzuki S."/>
            <person name="Tagami M."/>
            <person name="Waki K."/>
            <person name="Watahiki A."/>
            <person name="Okamura-Oho Y."/>
            <person name="Suzuki H."/>
            <person name="Kawai J."/>
            <person name="Hayashizaki Y."/>
        </authorList>
    </citation>
    <scope>NUCLEOTIDE SEQUENCE [LARGE SCALE MRNA] (ISOFORMS 1 AND 2)</scope>
    <source>
        <strain>C57BL/6J</strain>
        <tissue>Embryo</tissue>
        <tissue>Heart</tissue>
    </source>
</reference>
<name>ZCCHL_MOUSE</name>
<proteinExistence type="evidence at transcript level"/>
<gene>
    <name type="primary">Zc3hav1l</name>
</gene>
<organism>
    <name type="scientific">Mus musculus</name>
    <name type="common">Mouse</name>
    <dbReference type="NCBI Taxonomy" id="10090"/>
    <lineage>
        <taxon>Eukaryota</taxon>
        <taxon>Metazoa</taxon>
        <taxon>Chordata</taxon>
        <taxon>Craniata</taxon>
        <taxon>Vertebrata</taxon>
        <taxon>Euteleostomi</taxon>
        <taxon>Mammalia</taxon>
        <taxon>Eutheria</taxon>
        <taxon>Euarchontoglires</taxon>
        <taxon>Glires</taxon>
        <taxon>Rodentia</taxon>
        <taxon>Myomorpha</taxon>
        <taxon>Muroidea</taxon>
        <taxon>Muridae</taxon>
        <taxon>Murinae</taxon>
        <taxon>Mus</taxon>
        <taxon>Mus</taxon>
    </lineage>
</organism>
<accession>Q8BFR1</accession>
<accession>Q8C3Z2</accession>
<dbReference type="EMBL" id="AK045287">
    <property type="protein sequence ID" value="BAC32297.1"/>
    <property type="molecule type" value="mRNA"/>
</dbReference>
<dbReference type="EMBL" id="AK051064">
    <property type="protein sequence ID" value="BAC34514.1"/>
    <property type="molecule type" value="mRNA"/>
</dbReference>
<dbReference type="EMBL" id="AK084475">
    <property type="protein sequence ID" value="BAC39193.1"/>
    <property type="molecule type" value="mRNA"/>
</dbReference>
<dbReference type="CCDS" id="CCDS20011.1">
    <molecule id="Q8BFR1-1"/>
</dbReference>
<dbReference type="RefSeq" id="NP_766055.1">
    <molecule id="Q8BFR1-1"/>
    <property type="nucleotide sequence ID" value="NM_172467.3"/>
</dbReference>
<dbReference type="SMR" id="Q8BFR1"/>
<dbReference type="BioGRID" id="229041">
    <property type="interactions" value="1"/>
</dbReference>
<dbReference type="FunCoup" id="Q8BFR1">
    <property type="interactions" value="322"/>
</dbReference>
<dbReference type="STRING" id="10090.ENSMUSP00000062475"/>
<dbReference type="PhosphoSitePlus" id="Q8BFR1"/>
<dbReference type="PaxDb" id="10090-ENSMUSP00000062475"/>
<dbReference type="PeptideAtlas" id="Q8BFR1"/>
<dbReference type="ProteomicsDB" id="298500">
    <molecule id="Q8BFR1-1"/>
</dbReference>
<dbReference type="ProteomicsDB" id="298501">
    <molecule id="Q8BFR1-2"/>
</dbReference>
<dbReference type="Pumba" id="Q8BFR1"/>
<dbReference type="Antibodypedia" id="18221">
    <property type="antibodies" value="76 antibodies from 17 providers"/>
</dbReference>
<dbReference type="Ensembl" id="ENSMUST00000058524.3">
    <molecule id="Q8BFR1-1"/>
    <property type="protein sequence ID" value="ENSMUSP00000062475.3"/>
    <property type="gene ID" value="ENSMUSG00000047749.3"/>
</dbReference>
<dbReference type="GeneID" id="209032"/>
<dbReference type="KEGG" id="mmu:209032"/>
<dbReference type="UCSC" id="uc009bjx.2">
    <molecule id="Q8BFR1-1"/>
    <property type="organism name" value="mouse"/>
</dbReference>
<dbReference type="AGR" id="MGI:2443387"/>
<dbReference type="CTD" id="92092"/>
<dbReference type="MGI" id="MGI:2443387">
    <property type="gene designation" value="Zc3hav1l"/>
</dbReference>
<dbReference type="VEuPathDB" id="HostDB:ENSMUSG00000047749"/>
<dbReference type="eggNOG" id="ENOG502T12H">
    <property type="taxonomic scope" value="Eukaryota"/>
</dbReference>
<dbReference type="GeneTree" id="ENSGT00710000106871"/>
<dbReference type="HOGENOM" id="CLU_085581_0_0_1"/>
<dbReference type="InParanoid" id="Q8BFR1"/>
<dbReference type="OMA" id="MLGKCPH"/>
<dbReference type="OrthoDB" id="6133115at2759"/>
<dbReference type="PhylomeDB" id="Q8BFR1"/>
<dbReference type="TreeFam" id="TF338389"/>
<dbReference type="BioGRID-ORCS" id="209032">
    <property type="hits" value="5 hits in 79 CRISPR screens"/>
</dbReference>
<dbReference type="ChiTaRS" id="Zc3hav1l">
    <property type="organism name" value="mouse"/>
</dbReference>
<dbReference type="PRO" id="PR:Q8BFR1"/>
<dbReference type="Proteomes" id="UP000000589">
    <property type="component" value="Chromosome 6"/>
</dbReference>
<dbReference type="RNAct" id="Q8BFR1">
    <property type="molecule type" value="protein"/>
</dbReference>
<dbReference type="Bgee" id="ENSMUSG00000047749">
    <property type="expression patterns" value="Expressed in manus and 188 other cell types or tissues"/>
</dbReference>
<dbReference type="ExpressionAtlas" id="Q8BFR1">
    <property type="expression patterns" value="baseline and differential"/>
</dbReference>
<dbReference type="GO" id="GO:0005829">
    <property type="term" value="C:cytosol"/>
    <property type="evidence" value="ECO:0007669"/>
    <property type="project" value="Ensembl"/>
</dbReference>
<dbReference type="GO" id="GO:0008270">
    <property type="term" value="F:zinc ion binding"/>
    <property type="evidence" value="ECO:0007669"/>
    <property type="project" value="UniProtKB-KW"/>
</dbReference>
<dbReference type="Gene3D" id="1.10.10.10">
    <property type="entry name" value="Winged helix-like DNA-binding domain superfamily/Winged helix DNA-binding domain"/>
    <property type="match status" value="1"/>
</dbReference>
<dbReference type="InterPro" id="IPR036388">
    <property type="entry name" value="WH-like_DNA-bd_sf"/>
</dbReference>
<dbReference type="InterPro" id="IPR041360">
    <property type="entry name" value="ZAP_HTH"/>
</dbReference>
<dbReference type="InterPro" id="IPR026693">
    <property type="entry name" value="Zc3hav1-like"/>
</dbReference>
<dbReference type="InterPro" id="IPR000571">
    <property type="entry name" value="Znf_CCCH"/>
</dbReference>
<dbReference type="PANTHER" id="PTHR47621">
    <property type="entry name" value="ZINC FINGER CCCH-TYPE ANTIVIRAL PROTEIN 1-LIKE"/>
    <property type="match status" value="1"/>
</dbReference>
<dbReference type="PANTHER" id="PTHR47621:SF1">
    <property type="entry name" value="ZINC FINGER CCCH-TYPE ANTIVIRAL PROTEIN 1-LIKE"/>
    <property type="match status" value="1"/>
</dbReference>
<dbReference type="Pfam" id="PF18606">
    <property type="entry name" value="HTH_53"/>
    <property type="match status" value="1"/>
</dbReference>
<dbReference type="Pfam" id="PF25261">
    <property type="entry name" value="zf-CCCH_PARP12"/>
    <property type="match status" value="1"/>
</dbReference>
<dbReference type="PROSITE" id="PS50103">
    <property type="entry name" value="ZF_C3H1"/>
    <property type="match status" value="2"/>
</dbReference>
<comment type="alternative products">
    <event type="alternative splicing"/>
    <isoform>
        <id>Q8BFR1-1</id>
        <name>1</name>
        <sequence type="displayed"/>
    </isoform>
    <isoform>
        <id>Q8BFR1-2</id>
        <name>2</name>
        <sequence type="described" ref="VSP_033212"/>
    </isoform>
</comment>
<comment type="caution">
    <text evidence="4">Despite its name, it does not contain a canonical C3H1-type zinc-finger.</text>
</comment>
<sequence>MADLTLCAFLTKVLCAHGGRMFLQDLRGHVELSEAKLRAVLRRAGPERFLLQEVELRDGPWDAEAEVAAGEGAGAGSGGGATACRVMAVSSARLCARYQRGECQGCDQLHLCRRHMLGKCPHRDCWSTCSLSHDIHTPINVQVLKSRGLFGLNEGQLRILLLQNDPCLFPEVCQMYNKGVDVLYGYCSLKDRCNKFHVCKSFVRGECPFQPCKRSHQLIHAATLKLLEDQELSVSSVVNFQIISVYRHKKLHKMLEEKDHSASTEQPQGLGKQGALGAVEARPFLPARAQSPRKPQ</sequence>
<evidence type="ECO:0000250" key="1">
    <source>
        <dbReference type="UniProtKB" id="Q96H79"/>
    </source>
</evidence>
<evidence type="ECO:0000255" key="2">
    <source>
        <dbReference type="PROSITE-ProRule" id="PRU00723"/>
    </source>
</evidence>
<evidence type="ECO:0000303" key="3">
    <source>
    </source>
</evidence>
<evidence type="ECO:0000305" key="4"/>
<feature type="initiator methionine" description="Removed" evidence="1">
    <location>
        <position position="1"/>
    </location>
</feature>
<feature type="chain" id="PRO_0000331460" description="Zinc finger CCCH-type antiviral protein 1-like">
    <location>
        <begin position="2"/>
        <end position="296"/>
    </location>
</feature>
<feature type="zinc finger region" description="C3H1-type 1" evidence="2">
    <location>
        <begin position="111"/>
        <end position="136"/>
    </location>
</feature>
<feature type="zinc finger region" description="C3H1-type 2" evidence="2">
    <location>
        <begin position="198"/>
        <end position="219"/>
    </location>
</feature>
<feature type="modified residue" description="N-acetylalanine" evidence="1">
    <location>
        <position position="2"/>
    </location>
</feature>
<feature type="splice variant" id="VSP_033212" description="In isoform 2." evidence="3">
    <location>
        <begin position="1"/>
        <end position="86"/>
    </location>
</feature>
<protein>
    <recommendedName>
        <fullName>Zinc finger CCCH-type antiviral protein 1-like</fullName>
    </recommendedName>
</protein>